<feature type="chain" id="PRO_0000210155" description="Choline O-acetyltransferase">
    <location>
        <begin position="1"/>
        <end position="641"/>
    </location>
</feature>
<feature type="region of interest" description="Disordered" evidence="3">
    <location>
        <begin position="615"/>
        <end position="641"/>
    </location>
</feature>
<feature type="active site" description="Proton acceptor" evidence="1">
    <location>
        <position position="335"/>
    </location>
</feature>
<feature type="binding site" evidence="1">
    <location>
        <begin position="413"/>
        <end position="425"/>
    </location>
    <ligand>
        <name>CoA</name>
        <dbReference type="ChEBI" id="CHEBI:57287"/>
    </ligand>
</feature>
<feature type="binding site" evidence="1">
    <location>
        <position position="451"/>
    </location>
    <ligand>
        <name>CoA</name>
        <dbReference type="ChEBI" id="CHEBI:57287"/>
    </ligand>
</feature>
<feature type="binding site" evidence="1">
    <location>
        <position position="552"/>
    </location>
    <ligand>
        <name>CoA</name>
        <dbReference type="ChEBI" id="CHEBI:57287"/>
    </ligand>
</feature>
<feature type="modified residue" description="Phosphoserine" evidence="2">
    <location>
        <position position="17"/>
    </location>
</feature>
<feature type="modified residue" description="Phosphoserine" evidence="2">
    <location>
        <position position="366"/>
    </location>
</feature>
<comment type="function">
    <text>Catalyzes the reversible synthesis of acetylcholine (ACh) from acetyl CoA and choline at cholinergic synapses.</text>
</comment>
<comment type="catalytic activity">
    <reaction>
        <text>choline + acetyl-CoA = acetylcholine + CoA</text>
        <dbReference type="Rhea" id="RHEA:18821"/>
        <dbReference type="ChEBI" id="CHEBI:15354"/>
        <dbReference type="ChEBI" id="CHEBI:15355"/>
        <dbReference type="ChEBI" id="CHEBI:57287"/>
        <dbReference type="ChEBI" id="CHEBI:57288"/>
        <dbReference type="EC" id="2.3.1.6"/>
    </reaction>
</comment>
<comment type="similarity">
    <text evidence="4">Belongs to the carnitine/choline acetyltransferase family.</text>
</comment>
<name>CLAT_MOUSE</name>
<evidence type="ECO:0000250" key="1"/>
<evidence type="ECO:0000250" key="2">
    <source>
        <dbReference type="UniProtKB" id="P32738"/>
    </source>
</evidence>
<evidence type="ECO:0000256" key="3">
    <source>
        <dbReference type="SAM" id="MobiDB-lite"/>
    </source>
</evidence>
<evidence type="ECO:0000305" key="4"/>
<accession>Q03059</accession>
<reference key="1">
    <citation type="journal article" date="1990" name="Brain Res. Mol. Brain Res.">
        <title>Complementary DNAs for choline acetyltransferase from spinal cords of rat and mouse: nucleotide sequences, expression in mammalian cells, and in situ hybridization.</title>
        <authorList>
            <person name="Ishii K."/>
            <person name="Oda Y."/>
            <person name="Ichikawa T."/>
            <person name="Deguchi T."/>
        </authorList>
    </citation>
    <scope>NUCLEOTIDE SEQUENCE</scope>
    <source>
        <tissue>Spinal cord</tissue>
    </source>
</reference>
<reference key="2">
    <citation type="journal article" date="1992" name="J. Biol. Chem.">
        <title>Gene expression of mouse choline acetyltransferase. Alternative splicing and identification of a highly active promoter region.</title>
        <authorList>
            <person name="Misawa H."/>
            <person name="Ishii K."/>
            <person name="Deguchi T."/>
        </authorList>
    </citation>
    <scope>NUCLEOTIDE SEQUENCE [GENOMIC DNA / MRNA] OF 1-219</scope>
    <source>
        <tissue>Spinal cord</tissue>
    </source>
</reference>
<keyword id="KW-0012">Acyltransferase</keyword>
<keyword id="KW-0530">Neurotransmitter biosynthesis</keyword>
<keyword id="KW-0597">Phosphoprotein</keyword>
<keyword id="KW-1185">Reference proteome</keyword>
<keyword id="KW-0808">Transferase</keyword>
<sequence>MPILEKVPPKMPVQASSCEEVLDLPKLPVPPLQQTLATYLQCMQHLVPEEQFRKSQAIVKRFGAPGGLGETLQEKLLERQEKTANWVSEYWLNDMYLNNRLALPVNSSPAVIFARQHFQDTNDQLRFAASLISGVLSYKALLDSQSIPTDWAKGQLSGQPLCMKQYYRLFSSYRLPGHTQDTLVAQKSSIMPEPEHVIVACCNQFFVLDVVINFRRLSEGDLFTQLRKIVKMASNEDERLPPIGLLTSDGRSEWAKARTVLLKDSTNRDSLDMIERCICLVCLDGPGTGDLSDTHRALQLLHGGGCSLNGANRWYDKSLQFVVGRDGTCGVVCEHSPFDGIVLVQCTEHLLKHMMTGNKKLVRVDSVSELPAPRRLRWKCSPETQGHLASSAEKLQRIVKNLDFIVYKFDNYGKTFIKKQKCSPDGFIQVALQLAYYRLYQRLVPTYESASIRRFQEGRVDNIRSATPEALAFVQAMTDHKAAVLASEKLQLLQRAIQAQTEYTVMAITGMAIDNHLLALRELARDLCKEPPEMFMDETYLMSNRFILSTSQVPTTMEMFCCYGPVVPNGYGACYNPHAEAITFCISSFHGCKETSSVEFAEAVGASLVDMRDLCSSRQPADSKPPTAKERARGPSQAKQS</sequence>
<gene>
    <name type="primary">Chat</name>
</gene>
<protein>
    <recommendedName>
        <fullName>Choline O-acetyltransferase</fullName>
        <shortName>CHOACTase</shortName>
        <shortName>ChAT</shortName>
        <shortName>Choline acetylase</shortName>
        <ecNumber>2.3.1.6</ecNumber>
    </recommendedName>
</protein>
<dbReference type="EC" id="2.3.1.6"/>
<dbReference type="EMBL" id="D12487">
    <property type="protein sequence ID" value="BAA02056.1"/>
    <property type="molecule type" value="mRNA"/>
</dbReference>
<dbReference type="EMBL" id="D12486">
    <property type="protein sequence ID" value="BAA02055.1"/>
    <property type="molecule type" value="Genomic_DNA"/>
</dbReference>
<dbReference type="EMBL" id="D12488">
    <property type="protein sequence ID" value="BAA20976.1"/>
    <property type="molecule type" value="mRNA"/>
</dbReference>
<dbReference type="EMBL" id="D12489">
    <property type="protein sequence ID" value="BAA20977.1"/>
    <property type="molecule type" value="mRNA"/>
</dbReference>
<dbReference type="EMBL" id="D12490">
    <property type="protein sequence ID" value="BAA02057.1"/>
    <property type="molecule type" value="mRNA"/>
</dbReference>
<dbReference type="EMBL" id="D12491">
    <property type="protein sequence ID" value="BAA20978.1"/>
    <property type="molecule type" value="mRNA"/>
</dbReference>
<dbReference type="EMBL" id="D12492">
    <property type="protein sequence ID" value="BAA20979.1"/>
    <property type="molecule type" value="mRNA"/>
</dbReference>
<dbReference type="EMBL" id="D12493">
    <property type="protein sequence ID" value="BAA20980.1"/>
    <property type="molecule type" value="mRNA"/>
</dbReference>
<dbReference type="PIR" id="B43777">
    <property type="entry name" value="B43777"/>
</dbReference>
<dbReference type="SMR" id="Q03059"/>
<dbReference type="FunCoup" id="Q03059">
    <property type="interactions" value="132"/>
</dbReference>
<dbReference type="STRING" id="10090.ENSMUSP00000070865"/>
<dbReference type="ChEMBL" id="CHEMBL5900"/>
<dbReference type="GuidetoPHARMACOLOGY" id="2480"/>
<dbReference type="iPTMnet" id="Q03059"/>
<dbReference type="PhosphoSitePlus" id="Q03059"/>
<dbReference type="PaxDb" id="10090-ENSMUSP00000070865"/>
<dbReference type="ProteomicsDB" id="283520"/>
<dbReference type="AGR" id="MGI:88392"/>
<dbReference type="MGI" id="MGI:88392">
    <property type="gene designation" value="Chat"/>
</dbReference>
<dbReference type="eggNOG" id="KOG3717">
    <property type="taxonomic scope" value="Eukaryota"/>
</dbReference>
<dbReference type="InParanoid" id="Q03059"/>
<dbReference type="PhylomeDB" id="Q03059"/>
<dbReference type="BRENDA" id="2.3.1.6">
    <property type="organism ID" value="3474"/>
</dbReference>
<dbReference type="Reactome" id="R-MMU-1483191">
    <property type="pathway name" value="Synthesis of PC"/>
</dbReference>
<dbReference type="Reactome" id="R-MMU-264642">
    <property type="pathway name" value="Acetylcholine Neurotransmitter Release Cycle"/>
</dbReference>
<dbReference type="ChiTaRS" id="Sh2d3c">
    <property type="organism name" value="mouse"/>
</dbReference>
<dbReference type="PRO" id="PR:Q03059"/>
<dbReference type="Proteomes" id="UP000000589">
    <property type="component" value="Unplaced"/>
</dbReference>
<dbReference type="RNAct" id="Q03059">
    <property type="molecule type" value="protein"/>
</dbReference>
<dbReference type="GO" id="GO:0030424">
    <property type="term" value="C:axon"/>
    <property type="evidence" value="ECO:0000314"/>
    <property type="project" value="MGI"/>
</dbReference>
<dbReference type="GO" id="GO:0005737">
    <property type="term" value="C:cytoplasm"/>
    <property type="evidence" value="ECO:0000314"/>
    <property type="project" value="MGI"/>
</dbReference>
<dbReference type="GO" id="GO:0005739">
    <property type="term" value="C:mitochondrion"/>
    <property type="evidence" value="ECO:0007005"/>
    <property type="project" value="MGI"/>
</dbReference>
<dbReference type="GO" id="GO:0043005">
    <property type="term" value="C:neuron projection"/>
    <property type="evidence" value="ECO:0000314"/>
    <property type="project" value="MGI"/>
</dbReference>
<dbReference type="GO" id="GO:0043025">
    <property type="term" value="C:neuronal cell body"/>
    <property type="evidence" value="ECO:0000314"/>
    <property type="project" value="MGI"/>
</dbReference>
<dbReference type="GO" id="GO:0045202">
    <property type="term" value="C:synapse"/>
    <property type="evidence" value="ECO:0007669"/>
    <property type="project" value="GOC"/>
</dbReference>
<dbReference type="GO" id="GO:0004102">
    <property type="term" value="F:choline O-acetyltransferase activity"/>
    <property type="evidence" value="ECO:0000315"/>
    <property type="project" value="MGI"/>
</dbReference>
<dbReference type="GO" id="GO:0007628">
    <property type="term" value="P:adult walking behavior"/>
    <property type="evidence" value="ECO:0000315"/>
    <property type="project" value="MGI"/>
</dbReference>
<dbReference type="GO" id="GO:0007268">
    <property type="term" value="P:chemical synaptic transmission"/>
    <property type="evidence" value="ECO:0000315"/>
    <property type="project" value="MGI"/>
</dbReference>
<dbReference type="GO" id="GO:0016358">
    <property type="term" value="P:dendrite development"/>
    <property type="evidence" value="ECO:0000315"/>
    <property type="project" value="MGI"/>
</dbReference>
<dbReference type="GO" id="GO:0007529">
    <property type="term" value="P:establishment of synaptic specificity at neuromuscular junction"/>
    <property type="evidence" value="ECO:0000315"/>
    <property type="project" value="MGI"/>
</dbReference>
<dbReference type="GO" id="GO:0007517">
    <property type="term" value="P:muscle organ development"/>
    <property type="evidence" value="ECO:0000315"/>
    <property type="project" value="MGI"/>
</dbReference>
<dbReference type="GO" id="GO:0007274">
    <property type="term" value="P:neuromuscular synaptic transmission"/>
    <property type="evidence" value="ECO:0000315"/>
    <property type="project" value="MGI"/>
</dbReference>
<dbReference type="GO" id="GO:0030182">
    <property type="term" value="P:neuron differentiation"/>
    <property type="evidence" value="ECO:0000315"/>
    <property type="project" value="MGI"/>
</dbReference>
<dbReference type="GO" id="GO:0007622">
    <property type="term" value="P:rhythmic behavior"/>
    <property type="evidence" value="ECO:0000315"/>
    <property type="project" value="MGI"/>
</dbReference>
<dbReference type="GO" id="GO:0043179">
    <property type="term" value="P:rhythmic excitation"/>
    <property type="evidence" value="ECO:0000315"/>
    <property type="project" value="MGI"/>
</dbReference>
<dbReference type="FunFam" id="3.30.559.10:FF:000001">
    <property type="entry name" value="Carnitine O-acetyltransferase"/>
    <property type="match status" value="1"/>
</dbReference>
<dbReference type="FunFam" id="3.30.559.70:FF:000004">
    <property type="entry name" value="Choline O-acetyltransferase"/>
    <property type="match status" value="1"/>
</dbReference>
<dbReference type="Gene3D" id="3.30.559.10">
    <property type="entry name" value="Chloramphenicol acetyltransferase-like domain"/>
    <property type="match status" value="1"/>
</dbReference>
<dbReference type="Gene3D" id="3.30.559.70">
    <property type="entry name" value="Choline/Carnitine o-acyltransferase, domain 2"/>
    <property type="match status" value="1"/>
</dbReference>
<dbReference type="InterPro" id="IPR000542">
    <property type="entry name" value="Carn_acyl_trans"/>
</dbReference>
<dbReference type="InterPro" id="IPR023213">
    <property type="entry name" value="CAT-like_dom_sf"/>
</dbReference>
<dbReference type="InterPro" id="IPR039551">
    <property type="entry name" value="Cho/carn_acyl_trans"/>
</dbReference>
<dbReference type="InterPro" id="IPR042231">
    <property type="entry name" value="Cho/carn_acyl_trans_2"/>
</dbReference>
<dbReference type="PANTHER" id="PTHR22589">
    <property type="entry name" value="CARNITINE O-ACYLTRANSFERASE"/>
    <property type="match status" value="1"/>
</dbReference>
<dbReference type="PANTHER" id="PTHR22589:SF14">
    <property type="entry name" value="CHOLINE O-ACETYLTRANSFERASE"/>
    <property type="match status" value="1"/>
</dbReference>
<dbReference type="Pfam" id="PF00755">
    <property type="entry name" value="Carn_acyltransf"/>
    <property type="match status" value="1"/>
</dbReference>
<dbReference type="SUPFAM" id="SSF52777">
    <property type="entry name" value="CoA-dependent acyltransferases"/>
    <property type="match status" value="2"/>
</dbReference>
<dbReference type="PROSITE" id="PS00439">
    <property type="entry name" value="ACYLTRANSF_C_1"/>
    <property type="match status" value="1"/>
</dbReference>
<dbReference type="PROSITE" id="PS00440">
    <property type="entry name" value="ACYLTRANSF_C_2"/>
    <property type="match status" value="1"/>
</dbReference>
<organism>
    <name type="scientific">Mus musculus</name>
    <name type="common">Mouse</name>
    <dbReference type="NCBI Taxonomy" id="10090"/>
    <lineage>
        <taxon>Eukaryota</taxon>
        <taxon>Metazoa</taxon>
        <taxon>Chordata</taxon>
        <taxon>Craniata</taxon>
        <taxon>Vertebrata</taxon>
        <taxon>Euteleostomi</taxon>
        <taxon>Mammalia</taxon>
        <taxon>Eutheria</taxon>
        <taxon>Euarchontoglires</taxon>
        <taxon>Glires</taxon>
        <taxon>Rodentia</taxon>
        <taxon>Myomorpha</taxon>
        <taxon>Muroidea</taxon>
        <taxon>Muridae</taxon>
        <taxon>Murinae</taxon>
        <taxon>Mus</taxon>
        <taxon>Mus</taxon>
    </lineage>
</organism>
<proteinExistence type="evidence at transcript level"/>